<protein>
    <recommendedName>
        <fullName evidence="1">Cytoskeleton protein RodZ</fullName>
    </recommendedName>
</protein>
<feature type="chain" id="PRO_0000361851" description="Cytoskeleton protein RodZ">
    <location>
        <begin position="1"/>
        <end position="334"/>
    </location>
</feature>
<feature type="topological domain" description="Cytoplasmic" evidence="1">
    <location>
        <begin position="1"/>
        <end position="111"/>
    </location>
</feature>
<feature type="transmembrane region" description="Helical; Signal-anchor for type II membrane protein" evidence="1">
    <location>
        <begin position="112"/>
        <end position="132"/>
    </location>
</feature>
<feature type="topological domain" description="Periplasmic" evidence="1">
    <location>
        <begin position="133"/>
        <end position="334"/>
    </location>
</feature>
<feature type="domain" description="HTH cro/C1-type" evidence="1">
    <location>
        <begin position="19"/>
        <end position="71"/>
    </location>
</feature>
<feature type="DNA-binding region" description="H-T-H motif" evidence="1">
    <location>
        <begin position="30"/>
        <end position="49"/>
    </location>
</feature>
<feature type="region of interest" description="Disordered" evidence="2">
    <location>
        <begin position="155"/>
        <end position="241"/>
    </location>
</feature>
<feature type="compositionally biased region" description="Polar residues" evidence="2">
    <location>
        <begin position="161"/>
        <end position="175"/>
    </location>
</feature>
<feature type="compositionally biased region" description="Low complexity" evidence="2">
    <location>
        <begin position="176"/>
        <end position="211"/>
    </location>
</feature>
<feature type="compositionally biased region" description="Low complexity" evidence="2">
    <location>
        <begin position="219"/>
        <end position="241"/>
    </location>
</feature>
<dbReference type="EMBL" id="AM933172">
    <property type="protein sequence ID" value="CAR34087.1"/>
    <property type="molecule type" value="Genomic_DNA"/>
</dbReference>
<dbReference type="RefSeq" id="WP_001090894.1">
    <property type="nucleotide sequence ID" value="NC_011294.1"/>
</dbReference>
<dbReference type="SMR" id="B5R583"/>
<dbReference type="KEGG" id="set:SEN2504"/>
<dbReference type="HOGENOM" id="CLU_047530_3_1_6"/>
<dbReference type="Proteomes" id="UP000000613">
    <property type="component" value="Chromosome"/>
</dbReference>
<dbReference type="GO" id="GO:0005886">
    <property type="term" value="C:plasma membrane"/>
    <property type="evidence" value="ECO:0007669"/>
    <property type="project" value="UniProtKB-SubCell"/>
</dbReference>
<dbReference type="GO" id="GO:0003677">
    <property type="term" value="F:DNA binding"/>
    <property type="evidence" value="ECO:0007669"/>
    <property type="project" value="UniProtKB-KW"/>
</dbReference>
<dbReference type="GO" id="GO:0008360">
    <property type="term" value="P:regulation of cell shape"/>
    <property type="evidence" value="ECO:0007669"/>
    <property type="project" value="UniProtKB-UniRule"/>
</dbReference>
<dbReference type="CDD" id="cd00093">
    <property type="entry name" value="HTH_XRE"/>
    <property type="match status" value="1"/>
</dbReference>
<dbReference type="FunFam" id="1.10.260.40:FF:000014">
    <property type="entry name" value="Cytoskeleton protein RodZ"/>
    <property type="match status" value="1"/>
</dbReference>
<dbReference type="Gene3D" id="1.10.260.40">
    <property type="entry name" value="lambda repressor-like DNA-binding domains"/>
    <property type="match status" value="1"/>
</dbReference>
<dbReference type="HAMAP" id="MF_02017">
    <property type="entry name" value="RodZ"/>
    <property type="match status" value="1"/>
</dbReference>
<dbReference type="InterPro" id="IPR050400">
    <property type="entry name" value="Bact_Cytoskel_RodZ"/>
</dbReference>
<dbReference type="InterPro" id="IPR001387">
    <property type="entry name" value="Cro/C1-type_HTH"/>
</dbReference>
<dbReference type="InterPro" id="IPR010982">
    <property type="entry name" value="Lambda_DNA-bd_dom_sf"/>
</dbReference>
<dbReference type="InterPro" id="IPR023690">
    <property type="entry name" value="RodZ"/>
</dbReference>
<dbReference type="InterPro" id="IPR025194">
    <property type="entry name" value="RodZ-like_C"/>
</dbReference>
<dbReference type="NCBIfam" id="NF008109">
    <property type="entry name" value="PRK10856.1"/>
    <property type="match status" value="1"/>
</dbReference>
<dbReference type="PANTHER" id="PTHR34475">
    <property type="match status" value="1"/>
</dbReference>
<dbReference type="PANTHER" id="PTHR34475:SF1">
    <property type="entry name" value="CYTOSKELETON PROTEIN RODZ"/>
    <property type="match status" value="1"/>
</dbReference>
<dbReference type="Pfam" id="PF13413">
    <property type="entry name" value="HTH_25"/>
    <property type="match status" value="1"/>
</dbReference>
<dbReference type="Pfam" id="PF13464">
    <property type="entry name" value="RodZ_C"/>
    <property type="match status" value="1"/>
</dbReference>
<dbReference type="SMART" id="SM00530">
    <property type="entry name" value="HTH_XRE"/>
    <property type="match status" value="1"/>
</dbReference>
<dbReference type="SUPFAM" id="SSF47413">
    <property type="entry name" value="lambda repressor-like DNA-binding domains"/>
    <property type="match status" value="1"/>
</dbReference>
<dbReference type="PROSITE" id="PS50943">
    <property type="entry name" value="HTH_CROC1"/>
    <property type="match status" value="1"/>
</dbReference>
<comment type="function">
    <text evidence="1">Cytoskeletal protein that is involved in cell-shape control through regulation of the length of the long axis.</text>
</comment>
<comment type="subcellular location">
    <subcellularLocation>
        <location evidence="1">Cell inner membrane</location>
        <topology evidence="1">Single-pass type II membrane protein</topology>
    </subcellularLocation>
    <text evidence="1">Forms helical filaments along the long axis of the cell.</text>
</comment>
<comment type="domain">
    <text evidence="1">The helix-turn-helix (HTH) motif in the cytoplasmic domain of the N-terminus is involved in the formation of spirals to maintain the rigid rod shape. As this protein is anchored in the cytoplasmic membrane, the HTH motif may contribute to protein-protein interactions to form the RodZ helix, which is localized beneath the cytoplasmic membrane. The C-terminal domain may be critical for determination of the rod shape by probably interacting with enzymes required for synthesis of the peptidoglycan layer, including PBPs in the periplasm.</text>
</comment>
<comment type="similarity">
    <text evidence="1">Belongs to the RodZ family.</text>
</comment>
<sequence length="334" mass="35687">MNTEATHDQNEAQTTGVRLRNAREQLGLSQQAVAERLCLKVSTVRDIEEDKAPSDLASTFLRGYIRSYARLVHVPEEELLPGLEKQAPLRAAKVAPMQSFSLGKRRKKRDGWLMSFTWLVLFVVVGLTGAWWWQNHKAQQEEITTMADQSTAELNADKDSGQSVPLDTGAVTSQDTTPAQTAPAPATPVDSTAATQTPAPTAAATQNTVVAPSQANVDTAATSAAPAATETPSALPTSQAGVAAPAADPNALVMNFTADCWLEVTDATGKKLFSGMQRKDGNLNLTGQAPYKLKIGAPAAVQIQYQGKPVDLSRFIRTNQVARLTLNAEPTPAQ</sequence>
<name>RODZ_SALEP</name>
<gene>
    <name evidence="1" type="primary">rodZ</name>
    <name type="ordered locus">SEN2504</name>
</gene>
<accession>B5R583</accession>
<proteinExistence type="inferred from homology"/>
<keyword id="KW-0997">Cell inner membrane</keyword>
<keyword id="KW-1003">Cell membrane</keyword>
<keyword id="KW-0133">Cell shape</keyword>
<keyword id="KW-0238">DNA-binding</keyword>
<keyword id="KW-0472">Membrane</keyword>
<keyword id="KW-0735">Signal-anchor</keyword>
<keyword id="KW-0812">Transmembrane</keyword>
<keyword id="KW-1133">Transmembrane helix</keyword>
<organism>
    <name type="scientific">Salmonella enteritidis PT4 (strain P125109)</name>
    <dbReference type="NCBI Taxonomy" id="550537"/>
    <lineage>
        <taxon>Bacteria</taxon>
        <taxon>Pseudomonadati</taxon>
        <taxon>Pseudomonadota</taxon>
        <taxon>Gammaproteobacteria</taxon>
        <taxon>Enterobacterales</taxon>
        <taxon>Enterobacteriaceae</taxon>
        <taxon>Salmonella</taxon>
    </lineage>
</organism>
<evidence type="ECO:0000255" key="1">
    <source>
        <dbReference type="HAMAP-Rule" id="MF_02017"/>
    </source>
</evidence>
<evidence type="ECO:0000256" key="2">
    <source>
        <dbReference type="SAM" id="MobiDB-lite"/>
    </source>
</evidence>
<reference key="1">
    <citation type="journal article" date="2008" name="Genome Res.">
        <title>Comparative genome analysis of Salmonella enteritidis PT4 and Salmonella gallinarum 287/91 provides insights into evolutionary and host adaptation pathways.</title>
        <authorList>
            <person name="Thomson N.R."/>
            <person name="Clayton D.J."/>
            <person name="Windhorst D."/>
            <person name="Vernikos G."/>
            <person name="Davidson S."/>
            <person name="Churcher C."/>
            <person name="Quail M.A."/>
            <person name="Stevens M."/>
            <person name="Jones M.A."/>
            <person name="Watson M."/>
            <person name="Barron A."/>
            <person name="Layton A."/>
            <person name="Pickard D."/>
            <person name="Kingsley R.A."/>
            <person name="Bignell A."/>
            <person name="Clark L."/>
            <person name="Harris B."/>
            <person name="Ormond D."/>
            <person name="Abdellah Z."/>
            <person name="Brooks K."/>
            <person name="Cherevach I."/>
            <person name="Chillingworth T."/>
            <person name="Woodward J."/>
            <person name="Norberczak H."/>
            <person name="Lord A."/>
            <person name="Arrowsmith C."/>
            <person name="Jagels K."/>
            <person name="Moule S."/>
            <person name="Mungall K."/>
            <person name="Saunders M."/>
            <person name="Whitehead S."/>
            <person name="Chabalgoity J.A."/>
            <person name="Maskell D."/>
            <person name="Humphreys T."/>
            <person name="Roberts M."/>
            <person name="Barrow P.A."/>
            <person name="Dougan G."/>
            <person name="Parkhill J."/>
        </authorList>
    </citation>
    <scope>NUCLEOTIDE SEQUENCE [LARGE SCALE GENOMIC DNA]</scope>
    <source>
        <strain>P125109</strain>
    </source>
</reference>